<keyword id="KW-0150">Chloroplast</keyword>
<keyword id="KW-0934">Plastid</keyword>
<keyword id="KW-1185">Reference proteome</keyword>
<keyword id="KW-0687">Ribonucleoprotein</keyword>
<keyword id="KW-0689">Ribosomal protein</keyword>
<keyword id="KW-0694">RNA-binding</keyword>
<keyword id="KW-0699">rRNA-binding</keyword>
<geneLocation type="chloroplast"/>
<gene>
    <name evidence="1" type="primary">rpl14</name>
</gene>
<dbReference type="EMBL" id="AJ506156">
    <property type="protein sequence ID" value="CAD45143.1"/>
    <property type="molecule type" value="Genomic_DNA"/>
</dbReference>
<dbReference type="RefSeq" id="NP_904135.1">
    <property type="nucleotide sequence ID" value="NC_005086.1"/>
</dbReference>
<dbReference type="SMR" id="Q70XX4"/>
<dbReference type="STRING" id="13333.Q70XX4"/>
<dbReference type="GeneID" id="2546611"/>
<dbReference type="KEGG" id="atr:2546611"/>
<dbReference type="OrthoDB" id="274765at2759"/>
<dbReference type="Proteomes" id="UP000017836">
    <property type="component" value="Chloroplast"/>
</dbReference>
<dbReference type="GO" id="GO:0009507">
    <property type="term" value="C:chloroplast"/>
    <property type="evidence" value="ECO:0007669"/>
    <property type="project" value="UniProtKB-SubCell"/>
</dbReference>
<dbReference type="GO" id="GO:0022625">
    <property type="term" value="C:cytosolic large ribosomal subunit"/>
    <property type="evidence" value="ECO:0000318"/>
    <property type="project" value="GO_Central"/>
</dbReference>
<dbReference type="GO" id="GO:0070180">
    <property type="term" value="F:large ribosomal subunit rRNA binding"/>
    <property type="evidence" value="ECO:0000318"/>
    <property type="project" value="GO_Central"/>
</dbReference>
<dbReference type="GO" id="GO:0003735">
    <property type="term" value="F:structural constituent of ribosome"/>
    <property type="evidence" value="ECO:0000318"/>
    <property type="project" value="GO_Central"/>
</dbReference>
<dbReference type="GO" id="GO:0006412">
    <property type="term" value="P:translation"/>
    <property type="evidence" value="ECO:0007669"/>
    <property type="project" value="UniProtKB-UniRule"/>
</dbReference>
<dbReference type="CDD" id="cd00337">
    <property type="entry name" value="Ribosomal_uL14"/>
    <property type="match status" value="1"/>
</dbReference>
<dbReference type="FunFam" id="2.40.150.20:FF:000002">
    <property type="entry name" value="50S ribosomal protein L14, chloroplastic"/>
    <property type="match status" value="1"/>
</dbReference>
<dbReference type="Gene3D" id="2.40.150.20">
    <property type="entry name" value="Ribosomal protein L14"/>
    <property type="match status" value="1"/>
</dbReference>
<dbReference type="HAMAP" id="MF_01367">
    <property type="entry name" value="Ribosomal_uL14"/>
    <property type="match status" value="1"/>
</dbReference>
<dbReference type="InterPro" id="IPR000218">
    <property type="entry name" value="Ribosomal_uL14"/>
</dbReference>
<dbReference type="InterPro" id="IPR005745">
    <property type="entry name" value="Ribosomal_uL14_bac-type"/>
</dbReference>
<dbReference type="InterPro" id="IPR019972">
    <property type="entry name" value="Ribosomal_uL14_CS"/>
</dbReference>
<dbReference type="InterPro" id="IPR036853">
    <property type="entry name" value="Ribosomal_uL14_sf"/>
</dbReference>
<dbReference type="NCBIfam" id="TIGR01067">
    <property type="entry name" value="rplN_bact"/>
    <property type="match status" value="1"/>
</dbReference>
<dbReference type="PANTHER" id="PTHR11761">
    <property type="entry name" value="50S/60S RIBOSOMAL PROTEIN L14/L23"/>
    <property type="match status" value="1"/>
</dbReference>
<dbReference type="PANTHER" id="PTHR11761:SF3">
    <property type="entry name" value="LARGE RIBOSOMAL SUBUNIT PROTEIN UL14M"/>
    <property type="match status" value="1"/>
</dbReference>
<dbReference type="Pfam" id="PF00238">
    <property type="entry name" value="Ribosomal_L14"/>
    <property type="match status" value="1"/>
</dbReference>
<dbReference type="SMART" id="SM01374">
    <property type="entry name" value="Ribosomal_L14"/>
    <property type="match status" value="1"/>
</dbReference>
<dbReference type="SUPFAM" id="SSF50193">
    <property type="entry name" value="Ribosomal protein L14"/>
    <property type="match status" value="1"/>
</dbReference>
<dbReference type="PROSITE" id="PS00049">
    <property type="entry name" value="RIBOSOMAL_L14"/>
    <property type="match status" value="1"/>
</dbReference>
<sequence>MIQAQTYLNVADNSGARELMCIRIVGASNPRYAHIGDVIVAVIKEAVPNMPLERSEVIRAVIVRTCKELKRDNGIIIRYDDNAAVVIDPEGNPKGTRVFGSIAGELRHLNFTKIVSLAPEVF</sequence>
<protein>
    <recommendedName>
        <fullName evidence="1">Large ribosomal subunit protein uL14c</fullName>
    </recommendedName>
    <alternativeName>
        <fullName evidence="2">50S ribosomal protein L14, chloroplastic</fullName>
    </alternativeName>
</protein>
<accession>Q70XX4</accession>
<name>RK14_AMBTC</name>
<organism>
    <name type="scientific">Amborella trichopoda</name>
    <dbReference type="NCBI Taxonomy" id="13333"/>
    <lineage>
        <taxon>Eukaryota</taxon>
        <taxon>Viridiplantae</taxon>
        <taxon>Streptophyta</taxon>
        <taxon>Embryophyta</taxon>
        <taxon>Tracheophyta</taxon>
        <taxon>Spermatophyta</taxon>
        <taxon>Magnoliopsida</taxon>
        <taxon>Amborellales</taxon>
        <taxon>Amborellaceae</taxon>
        <taxon>Amborella</taxon>
    </lineage>
</organism>
<reference key="1">
    <citation type="journal article" date="2003" name="Mol. Biol. Evol.">
        <title>Analysis of the Amborella trichopoda chloroplast genome sequence suggests that Amborella is not a basal angiosperm.</title>
        <authorList>
            <person name="Goremykin V.V."/>
            <person name="Hirsch-Ernst K.I."/>
            <person name="Wolfl S."/>
            <person name="Hellwig F.H."/>
        </authorList>
    </citation>
    <scope>NUCLEOTIDE SEQUENCE [LARGE SCALE GENOMIC DNA]</scope>
</reference>
<comment type="function">
    <text evidence="1">Binds to 23S rRNA.</text>
</comment>
<comment type="subunit">
    <text evidence="1">Part of the 50S ribosomal subunit.</text>
</comment>
<comment type="subcellular location">
    <subcellularLocation>
        <location>Plastid</location>
        <location>Chloroplast</location>
    </subcellularLocation>
</comment>
<comment type="similarity">
    <text evidence="1">Belongs to the universal ribosomal protein uL14 family.</text>
</comment>
<feature type="chain" id="PRO_0000275157" description="Large ribosomal subunit protein uL14c">
    <location>
        <begin position="1"/>
        <end position="122"/>
    </location>
</feature>
<proteinExistence type="inferred from homology"/>
<evidence type="ECO:0000255" key="1">
    <source>
        <dbReference type="HAMAP-Rule" id="MF_01367"/>
    </source>
</evidence>
<evidence type="ECO:0000305" key="2"/>